<protein>
    <recommendedName>
        <fullName evidence="1">Small ribosomal subunit protein uS8</fullName>
    </recommendedName>
    <alternativeName>
        <fullName evidence="2">30S ribosomal protein S8</fullName>
    </alternativeName>
</protein>
<accession>B4UBB3</accession>
<proteinExistence type="inferred from homology"/>
<evidence type="ECO:0000255" key="1">
    <source>
        <dbReference type="HAMAP-Rule" id="MF_01302"/>
    </source>
</evidence>
<evidence type="ECO:0000305" key="2"/>
<reference key="1">
    <citation type="submission" date="2008-08" db="EMBL/GenBank/DDBJ databases">
        <title>Complete sequence of Anaeromyxobacter sp. K.</title>
        <authorList>
            <consortium name="US DOE Joint Genome Institute"/>
            <person name="Lucas S."/>
            <person name="Copeland A."/>
            <person name="Lapidus A."/>
            <person name="Glavina del Rio T."/>
            <person name="Dalin E."/>
            <person name="Tice H."/>
            <person name="Bruce D."/>
            <person name="Goodwin L."/>
            <person name="Pitluck S."/>
            <person name="Saunders E."/>
            <person name="Brettin T."/>
            <person name="Detter J.C."/>
            <person name="Han C."/>
            <person name="Larimer F."/>
            <person name="Land M."/>
            <person name="Hauser L."/>
            <person name="Kyrpides N."/>
            <person name="Ovchinnikiva G."/>
            <person name="Beliaev A."/>
        </authorList>
    </citation>
    <scope>NUCLEOTIDE SEQUENCE [LARGE SCALE GENOMIC DNA]</scope>
    <source>
        <strain>K</strain>
    </source>
</reference>
<sequence length="132" mass="14604">MSFTDPIGDMLTRIRNASSARHEKVLVPASRLKVRIAEVLREEGFIKDFVLHEDGVQGAITIVLKYSADREPAISDIKRVSKPGLRRYVATDSIPRVLNGMGVAILSTSKGVMVDREARKQKVGGELICTVW</sequence>
<name>RS8_ANASK</name>
<organism>
    <name type="scientific">Anaeromyxobacter sp. (strain K)</name>
    <dbReference type="NCBI Taxonomy" id="447217"/>
    <lineage>
        <taxon>Bacteria</taxon>
        <taxon>Pseudomonadati</taxon>
        <taxon>Myxococcota</taxon>
        <taxon>Myxococcia</taxon>
        <taxon>Myxococcales</taxon>
        <taxon>Cystobacterineae</taxon>
        <taxon>Anaeromyxobacteraceae</taxon>
        <taxon>Anaeromyxobacter</taxon>
    </lineage>
</organism>
<comment type="function">
    <text evidence="1">One of the primary rRNA binding proteins, it binds directly to 16S rRNA central domain where it helps coordinate assembly of the platform of the 30S subunit.</text>
</comment>
<comment type="subunit">
    <text evidence="1">Part of the 30S ribosomal subunit. Contacts proteins S5 and S12.</text>
</comment>
<comment type="similarity">
    <text evidence="1">Belongs to the universal ribosomal protein uS8 family.</text>
</comment>
<gene>
    <name evidence="1" type="primary">rpsH</name>
    <name type="ordered locus">AnaeK_1947</name>
</gene>
<feature type="chain" id="PRO_1000140506" description="Small ribosomal subunit protein uS8">
    <location>
        <begin position="1"/>
        <end position="132"/>
    </location>
</feature>
<keyword id="KW-0687">Ribonucleoprotein</keyword>
<keyword id="KW-0689">Ribosomal protein</keyword>
<keyword id="KW-0694">RNA-binding</keyword>
<keyword id="KW-0699">rRNA-binding</keyword>
<dbReference type="EMBL" id="CP001131">
    <property type="protein sequence ID" value="ACG73175.1"/>
    <property type="molecule type" value="Genomic_DNA"/>
</dbReference>
<dbReference type="RefSeq" id="WP_012525981.1">
    <property type="nucleotide sequence ID" value="NC_011145.1"/>
</dbReference>
<dbReference type="SMR" id="B4UBB3"/>
<dbReference type="KEGG" id="ank:AnaeK_1947"/>
<dbReference type="HOGENOM" id="CLU_098428_0_2_7"/>
<dbReference type="OrthoDB" id="9802617at2"/>
<dbReference type="Proteomes" id="UP000001871">
    <property type="component" value="Chromosome"/>
</dbReference>
<dbReference type="GO" id="GO:1990904">
    <property type="term" value="C:ribonucleoprotein complex"/>
    <property type="evidence" value="ECO:0007669"/>
    <property type="project" value="UniProtKB-KW"/>
</dbReference>
<dbReference type="GO" id="GO:0005840">
    <property type="term" value="C:ribosome"/>
    <property type="evidence" value="ECO:0007669"/>
    <property type="project" value="UniProtKB-KW"/>
</dbReference>
<dbReference type="GO" id="GO:0019843">
    <property type="term" value="F:rRNA binding"/>
    <property type="evidence" value="ECO:0007669"/>
    <property type="project" value="UniProtKB-UniRule"/>
</dbReference>
<dbReference type="GO" id="GO:0003735">
    <property type="term" value="F:structural constituent of ribosome"/>
    <property type="evidence" value="ECO:0007669"/>
    <property type="project" value="InterPro"/>
</dbReference>
<dbReference type="GO" id="GO:0006412">
    <property type="term" value="P:translation"/>
    <property type="evidence" value="ECO:0007669"/>
    <property type="project" value="UniProtKB-UniRule"/>
</dbReference>
<dbReference type="FunFam" id="3.30.1370.30:FF:000002">
    <property type="entry name" value="30S ribosomal protein S8"/>
    <property type="match status" value="1"/>
</dbReference>
<dbReference type="FunFam" id="3.30.1490.10:FF:000001">
    <property type="entry name" value="30S ribosomal protein S8"/>
    <property type="match status" value="1"/>
</dbReference>
<dbReference type="Gene3D" id="3.30.1370.30">
    <property type="match status" value="1"/>
</dbReference>
<dbReference type="Gene3D" id="3.30.1490.10">
    <property type="match status" value="1"/>
</dbReference>
<dbReference type="HAMAP" id="MF_01302_B">
    <property type="entry name" value="Ribosomal_uS8_B"/>
    <property type="match status" value="1"/>
</dbReference>
<dbReference type="InterPro" id="IPR000630">
    <property type="entry name" value="Ribosomal_uS8"/>
</dbReference>
<dbReference type="InterPro" id="IPR047863">
    <property type="entry name" value="Ribosomal_uS8_CS"/>
</dbReference>
<dbReference type="InterPro" id="IPR035987">
    <property type="entry name" value="Ribosomal_uS8_sf"/>
</dbReference>
<dbReference type="NCBIfam" id="NF001109">
    <property type="entry name" value="PRK00136.1"/>
    <property type="match status" value="1"/>
</dbReference>
<dbReference type="PANTHER" id="PTHR11758">
    <property type="entry name" value="40S RIBOSOMAL PROTEIN S15A"/>
    <property type="match status" value="1"/>
</dbReference>
<dbReference type="Pfam" id="PF00410">
    <property type="entry name" value="Ribosomal_S8"/>
    <property type="match status" value="1"/>
</dbReference>
<dbReference type="SUPFAM" id="SSF56047">
    <property type="entry name" value="Ribosomal protein S8"/>
    <property type="match status" value="1"/>
</dbReference>
<dbReference type="PROSITE" id="PS00053">
    <property type="entry name" value="RIBOSOMAL_S8"/>
    <property type="match status" value="1"/>
</dbReference>